<dbReference type="EC" id="3.1.2.6" evidence="1"/>
<dbReference type="EMBL" id="CP000020">
    <property type="protein sequence ID" value="AAW86433.2"/>
    <property type="molecule type" value="Genomic_DNA"/>
</dbReference>
<dbReference type="RefSeq" id="WP_011262416.1">
    <property type="nucleotide sequence ID" value="NC_006840.2"/>
</dbReference>
<dbReference type="RefSeq" id="YP_205321.2">
    <property type="nucleotide sequence ID" value="NC_006840.2"/>
</dbReference>
<dbReference type="SMR" id="Q5E3G3"/>
<dbReference type="STRING" id="312309.VF_1938"/>
<dbReference type="EnsemblBacteria" id="AAW86433">
    <property type="protein sequence ID" value="AAW86433"/>
    <property type="gene ID" value="VF_1938"/>
</dbReference>
<dbReference type="GeneID" id="54164635"/>
<dbReference type="KEGG" id="vfi:VF_1938"/>
<dbReference type="PATRIC" id="fig|312309.11.peg.1966"/>
<dbReference type="eggNOG" id="COG0491">
    <property type="taxonomic scope" value="Bacteria"/>
</dbReference>
<dbReference type="HOGENOM" id="CLU_030571_4_1_6"/>
<dbReference type="OrthoDB" id="9802248at2"/>
<dbReference type="UniPathway" id="UPA00619">
    <property type="reaction ID" value="UER00676"/>
</dbReference>
<dbReference type="Proteomes" id="UP000000537">
    <property type="component" value="Chromosome I"/>
</dbReference>
<dbReference type="GO" id="GO:0004416">
    <property type="term" value="F:hydroxyacylglutathione hydrolase activity"/>
    <property type="evidence" value="ECO:0007669"/>
    <property type="project" value="UniProtKB-UniRule"/>
</dbReference>
<dbReference type="GO" id="GO:0046872">
    <property type="term" value="F:metal ion binding"/>
    <property type="evidence" value="ECO:0007669"/>
    <property type="project" value="UniProtKB-KW"/>
</dbReference>
<dbReference type="GO" id="GO:0019243">
    <property type="term" value="P:methylglyoxal catabolic process to D-lactate via S-lactoyl-glutathione"/>
    <property type="evidence" value="ECO:0007669"/>
    <property type="project" value="InterPro"/>
</dbReference>
<dbReference type="CDD" id="cd07723">
    <property type="entry name" value="hydroxyacylglutathione_hydrolase_MBL-fold"/>
    <property type="match status" value="1"/>
</dbReference>
<dbReference type="Gene3D" id="3.60.15.10">
    <property type="entry name" value="Ribonuclease Z/Hydroxyacylglutathione hydrolase-like"/>
    <property type="match status" value="1"/>
</dbReference>
<dbReference type="HAMAP" id="MF_01374">
    <property type="entry name" value="Glyoxalase_2"/>
    <property type="match status" value="1"/>
</dbReference>
<dbReference type="InterPro" id="IPR035680">
    <property type="entry name" value="Clx_II_MBL"/>
</dbReference>
<dbReference type="InterPro" id="IPR050110">
    <property type="entry name" value="Glyoxalase_II_hydrolase"/>
</dbReference>
<dbReference type="InterPro" id="IPR032282">
    <property type="entry name" value="HAGH_C"/>
</dbReference>
<dbReference type="InterPro" id="IPR017782">
    <property type="entry name" value="Hydroxyacylglutathione_Hdrlase"/>
</dbReference>
<dbReference type="InterPro" id="IPR001279">
    <property type="entry name" value="Metallo-B-lactamas"/>
</dbReference>
<dbReference type="InterPro" id="IPR036866">
    <property type="entry name" value="RibonucZ/Hydroxyglut_hydro"/>
</dbReference>
<dbReference type="NCBIfam" id="TIGR03413">
    <property type="entry name" value="GSH_gloB"/>
    <property type="match status" value="1"/>
</dbReference>
<dbReference type="PANTHER" id="PTHR43705">
    <property type="entry name" value="HYDROXYACYLGLUTATHIONE HYDROLASE"/>
    <property type="match status" value="1"/>
</dbReference>
<dbReference type="PANTHER" id="PTHR43705:SF1">
    <property type="entry name" value="HYDROXYACYLGLUTATHIONE HYDROLASE GLOB"/>
    <property type="match status" value="1"/>
</dbReference>
<dbReference type="Pfam" id="PF16123">
    <property type="entry name" value="HAGH_C"/>
    <property type="match status" value="1"/>
</dbReference>
<dbReference type="Pfam" id="PF00753">
    <property type="entry name" value="Lactamase_B"/>
    <property type="match status" value="1"/>
</dbReference>
<dbReference type="PIRSF" id="PIRSF005457">
    <property type="entry name" value="Glx"/>
    <property type="match status" value="1"/>
</dbReference>
<dbReference type="SMART" id="SM00849">
    <property type="entry name" value="Lactamase_B"/>
    <property type="match status" value="1"/>
</dbReference>
<dbReference type="SUPFAM" id="SSF56281">
    <property type="entry name" value="Metallo-hydrolase/oxidoreductase"/>
    <property type="match status" value="1"/>
</dbReference>
<name>GLO2_ALIF1</name>
<proteinExistence type="inferred from homology"/>
<organism>
    <name type="scientific">Aliivibrio fischeri (strain ATCC 700601 / ES114)</name>
    <name type="common">Vibrio fischeri</name>
    <dbReference type="NCBI Taxonomy" id="312309"/>
    <lineage>
        <taxon>Bacteria</taxon>
        <taxon>Pseudomonadati</taxon>
        <taxon>Pseudomonadota</taxon>
        <taxon>Gammaproteobacteria</taxon>
        <taxon>Vibrionales</taxon>
        <taxon>Vibrionaceae</taxon>
        <taxon>Aliivibrio</taxon>
    </lineage>
</organism>
<reference key="1">
    <citation type="journal article" date="2005" name="Proc. Natl. Acad. Sci. U.S.A.">
        <title>Complete genome sequence of Vibrio fischeri: a symbiotic bacterium with pathogenic congeners.</title>
        <authorList>
            <person name="Ruby E.G."/>
            <person name="Urbanowski M."/>
            <person name="Campbell J."/>
            <person name="Dunn A."/>
            <person name="Faini M."/>
            <person name="Gunsalus R."/>
            <person name="Lostroh P."/>
            <person name="Lupp C."/>
            <person name="McCann J."/>
            <person name="Millikan D."/>
            <person name="Schaefer A."/>
            <person name="Stabb E."/>
            <person name="Stevens A."/>
            <person name="Visick K."/>
            <person name="Whistler C."/>
            <person name="Greenberg E.P."/>
        </authorList>
    </citation>
    <scope>NUCLEOTIDE SEQUENCE [LARGE SCALE GENOMIC DNA]</scope>
    <source>
        <strain>ATCC 700601 / ES114</strain>
    </source>
</reference>
<reference key="2">
    <citation type="journal article" date="2008" name="BMC Genomics">
        <title>Comparative genomics-based investigation of resequencing targets in Vibrio fischeri: focus on point miscalls and artefactual expansions.</title>
        <authorList>
            <person name="Mandel M.J."/>
            <person name="Stabb E.V."/>
            <person name="Ruby E.G."/>
        </authorList>
    </citation>
    <scope>SEQUENCE REVISION</scope>
</reference>
<gene>
    <name evidence="1" type="primary">gloB</name>
    <name type="ordered locus">VF_1938</name>
</gene>
<comment type="function">
    <text evidence="1">Thiolesterase that catalyzes the hydrolysis of S-D-lactoyl-glutathione to form glutathione and D-lactic acid.</text>
</comment>
<comment type="catalytic activity">
    <reaction evidence="1">
        <text>an S-(2-hydroxyacyl)glutathione + H2O = a 2-hydroxy carboxylate + glutathione + H(+)</text>
        <dbReference type="Rhea" id="RHEA:21864"/>
        <dbReference type="ChEBI" id="CHEBI:15377"/>
        <dbReference type="ChEBI" id="CHEBI:15378"/>
        <dbReference type="ChEBI" id="CHEBI:57925"/>
        <dbReference type="ChEBI" id="CHEBI:58896"/>
        <dbReference type="ChEBI" id="CHEBI:71261"/>
        <dbReference type="EC" id="3.1.2.6"/>
    </reaction>
</comment>
<comment type="cofactor">
    <cofactor evidence="1">
        <name>Zn(2+)</name>
        <dbReference type="ChEBI" id="CHEBI:29105"/>
    </cofactor>
    <text evidence="1">Binds 2 Zn(2+) ions per subunit.</text>
</comment>
<comment type="pathway">
    <text evidence="1">Secondary metabolite metabolism; methylglyoxal degradation; (R)-lactate from methylglyoxal: step 2/2.</text>
</comment>
<comment type="subunit">
    <text evidence="1">Monomer.</text>
</comment>
<comment type="similarity">
    <text evidence="1">Belongs to the metallo-beta-lactamase superfamily. Glyoxalase II family.</text>
</comment>
<evidence type="ECO:0000255" key="1">
    <source>
        <dbReference type="HAMAP-Rule" id="MF_01374"/>
    </source>
</evidence>
<keyword id="KW-0378">Hydrolase</keyword>
<keyword id="KW-0479">Metal-binding</keyword>
<keyword id="KW-1185">Reference proteome</keyword>
<keyword id="KW-0862">Zinc</keyword>
<accession>Q5E3G3</accession>
<sequence length="252" mass="28246">MLSVKSIPAFNDNYIWLIHNNDNHCVVVDPGDATPVLECIKEHDFILDAILITHHHHDHIGGVPELVRQFPNVNVVGPENEPIPTLTHPVGDGDFVELFDEQFMVLGVPGHTNGHVAYIGDEKLFCGDALFSAGCGRLFEGTAEQMFNSLQKMAALPDETEVYCAHEYTASNLAFALAVEPDNDYLLRYREKVLHLRAHGKSTIPSTLQREKLINPFLRTSEANVKKSVASKVQDSTEVEIFTALRRWKDEF</sequence>
<feature type="chain" id="PRO_0000309720" description="Hydroxyacylglutathione hydrolase">
    <location>
        <begin position="1"/>
        <end position="252"/>
    </location>
</feature>
<feature type="binding site" evidence="1">
    <location>
        <position position="54"/>
    </location>
    <ligand>
        <name>Zn(2+)</name>
        <dbReference type="ChEBI" id="CHEBI:29105"/>
        <label>1</label>
    </ligand>
</feature>
<feature type="binding site" evidence="1">
    <location>
        <position position="56"/>
    </location>
    <ligand>
        <name>Zn(2+)</name>
        <dbReference type="ChEBI" id="CHEBI:29105"/>
        <label>1</label>
    </ligand>
</feature>
<feature type="binding site" evidence="1">
    <location>
        <position position="58"/>
    </location>
    <ligand>
        <name>Zn(2+)</name>
        <dbReference type="ChEBI" id="CHEBI:29105"/>
        <label>2</label>
    </ligand>
</feature>
<feature type="binding site" evidence="1">
    <location>
        <position position="59"/>
    </location>
    <ligand>
        <name>Zn(2+)</name>
        <dbReference type="ChEBI" id="CHEBI:29105"/>
        <label>2</label>
    </ligand>
</feature>
<feature type="binding site" evidence="1">
    <location>
        <position position="111"/>
    </location>
    <ligand>
        <name>Zn(2+)</name>
        <dbReference type="ChEBI" id="CHEBI:29105"/>
        <label>1</label>
    </ligand>
</feature>
<feature type="binding site" evidence="1">
    <location>
        <position position="128"/>
    </location>
    <ligand>
        <name>Zn(2+)</name>
        <dbReference type="ChEBI" id="CHEBI:29105"/>
        <label>1</label>
    </ligand>
</feature>
<feature type="binding site" evidence="1">
    <location>
        <position position="128"/>
    </location>
    <ligand>
        <name>Zn(2+)</name>
        <dbReference type="ChEBI" id="CHEBI:29105"/>
        <label>2</label>
    </ligand>
</feature>
<feature type="binding site" evidence="1">
    <location>
        <position position="166"/>
    </location>
    <ligand>
        <name>Zn(2+)</name>
        <dbReference type="ChEBI" id="CHEBI:29105"/>
        <label>2</label>
    </ligand>
</feature>
<protein>
    <recommendedName>
        <fullName evidence="1">Hydroxyacylglutathione hydrolase</fullName>
        <ecNumber evidence="1">3.1.2.6</ecNumber>
    </recommendedName>
    <alternativeName>
        <fullName evidence="1">Glyoxalase II</fullName>
        <shortName evidence="1">Glx II</shortName>
    </alternativeName>
</protein>